<reference evidence="10" key="1">
    <citation type="journal article" date="2004" name="Genome Res.">
        <title>The status, quality, and expansion of the NIH full-length cDNA project: the Mammalian Gene Collection (MGC).</title>
        <authorList>
            <consortium name="The MGC Project Team"/>
        </authorList>
    </citation>
    <scope>NUCLEOTIDE SEQUENCE [LARGE SCALE MRNA]</scope>
    <source>
        <strain evidence="9">FVB/N</strain>
        <tissue>Mammary tumor</tissue>
    </source>
</reference>
<reference key="2">
    <citation type="journal article" date="2005" name="Mol. Biol. Cell">
        <title>TRAF7 sequesters c-Myb to the cytoplasm by stimulating its sumoylation.</title>
        <authorList>
            <person name="Morita Y."/>
            <person name="Kanei-Ishii C."/>
            <person name="Nomura T."/>
            <person name="Ishii S."/>
        </authorList>
    </citation>
    <scope>FUNCTION</scope>
    <scope>SUBCELLULAR LOCATION</scope>
    <scope>CATALYTIC ACTIVITY</scope>
    <scope>TISSUE SPECIFICITY</scope>
</reference>
<reference key="3">
    <citation type="journal article" date="2010" name="Cell">
        <title>A tissue-specific atlas of mouse protein phosphorylation and expression.</title>
        <authorList>
            <person name="Huttlin E.L."/>
            <person name="Jedrychowski M.P."/>
            <person name="Elias J.E."/>
            <person name="Goswami T."/>
            <person name="Rad R."/>
            <person name="Beausoleil S.A."/>
            <person name="Villen J."/>
            <person name="Haas W."/>
            <person name="Sowa M.E."/>
            <person name="Gygi S.P."/>
        </authorList>
    </citation>
    <scope>PHOSPHORYLATION [LARGE SCALE ANALYSIS] AT SER-12 AND SER-15</scope>
    <scope>IDENTIFICATION BY MASS SPECTROMETRY [LARGE SCALE ANALYSIS]</scope>
    <source>
        <tissue>Testis</tissue>
    </source>
</reference>
<reference key="4">
    <citation type="journal article" date="2022" name="Int. Immunopharmacol.">
        <title>Brain-specific TRAF7 deletion ameliorates traumatic brain injury by suppressing MEKK3-regulated glial inflammation and neuronal death.</title>
        <authorList>
            <person name="Yuxiong Y."/>
            <person name="Xujin X."/>
            <person name="Yi T."/>
            <person name="Ya C."/>
            <person name="Yujuan L."/>
            <person name="Shanshan H."/>
            <person name="Huiwen W."/>
        </authorList>
    </citation>
    <scope>FUNCTION</scope>
    <scope>DISRUPTION PHENOTYPE</scope>
</reference>
<feature type="chain" id="PRO_0000051297" description="E3 ubiquitin-protein ligase TRAF7">
    <location>
        <begin position="1"/>
        <end position="594"/>
    </location>
</feature>
<feature type="repeat" description="WD 1" evidence="2">
    <location>
        <begin position="318"/>
        <end position="357"/>
    </location>
</feature>
<feature type="repeat" description="WD 2" evidence="2">
    <location>
        <begin position="361"/>
        <end position="398"/>
    </location>
</feature>
<feature type="repeat" description="WD 3" evidence="2">
    <location>
        <begin position="401"/>
        <end position="437"/>
    </location>
</feature>
<feature type="repeat" description="WD 4" evidence="2">
    <location>
        <begin position="439"/>
        <end position="478"/>
    </location>
</feature>
<feature type="repeat" description="WD 5" evidence="2">
    <location>
        <begin position="481"/>
        <end position="518"/>
    </location>
</feature>
<feature type="repeat" description="WD 6" evidence="2">
    <location>
        <begin position="521"/>
        <end position="562"/>
    </location>
</feature>
<feature type="repeat" description="WD 7" evidence="2">
    <location>
        <begin position="565"/>
        <end position="593"/>
    </location>
</feature>
<feature type="zinc finger region" description="RING-type" evidence="3">
    <location>
        <begin position="55"/>
        <end position="89"/>
    </location>
</feature>
<feature type="zinc finger region" description="TRAF-type" evidence="4">
    <location>
        <begin position="146"/>
        <end position="216"/>
    </location>
</feature>
<feature type="region of interest" description="Disordered" evidence="5">
    <location>
        <begin position="1"/>
        <end position="33"/>
    </location>
</feature>
<feature type="compositionally biased region" description="Low complexity" evidence="5">
    <location>
        <begin position="15"/>
        <end position="29"/>
    </location>
</feature>
<feature type="modified residue" description="Phosphoserine" evidence="11">
    <location>
        <position position="12"/>
    </location>
</feature>
<feature type="modified residue" description="Phosphoserine" evidence="11">
    <location>
        <position position="15"/>
    </location>
</feature>
<name>TRAF7_MOUSE</name>
<evidence type="ECO:0000250" key="1">
    <source>
        <dbReference type="UniProtKB" id="Q6Q0C0"/>
    </source>
</evidence>
<evidence type="ECO:0000255" key="2"/>
<evidence type="ECO:0000255" key="3">
    <source>
        <dbReference type="PROSITE-ProRule" id="PRU00175"/>
    </source>
</evidence>
<evidence type="ECO:0000255" key="4">
    <source>
        <dbReference type="PROSITE-ProRule" id="PRU00207"/>
    </source>
</evidence>
<evidence type="ECO:0000256" key="5">
    <source>
        <dbReference type="SAM" id="MobiDB-lite"/>
    </source>
</evidence>
<evidence type="ECO:0000269" key="6">
    <source>
    </source>
</evidence>
<evidence type="ECO:0000269" key="7">
    <source>
    </source>
</evidence>
<evidence type="ECO:0000305" key="8"/>
<evidence type="ECO:0000312" key="9">
    <source>
        <dbReference type="EMBL" id="AAH05649.1"/>
    </source>
</evidence>
<evidence type="ECO:0000312" key="10">
    <source>
        <dbReference type="EMBL" id="AAH08598.1"/>
    </source>
</evidence>
<evidence type="ECO:0007744" key="11">
    <source>
    </source>
</evidence>
<organism>
    <name type="scientific">Mus musculus</name>
    <name type="common">Mouse</name>
    <dbReference type="NCBI Taxonomy" id="10090"/>
    <lineage>
        <taxon>Eukaryota</taxon>
        <taxon>Metazoa</taxon>
        <taxon>Chordata</taxon>
        <taxon>Craniata</taxon>
        <taxon>Vertebrata</taxon>
        <taxon>Euteleostomi</taxon>
        <taxon>Mammalia</taxon>
        <taxon>Eutheria</taxon>
        <taxon>Euarchontoglires</taxon>
        <taxon>Glires</taxon>
        <taxon>Rodentia</taxon>
        <taxon>Myomorpha</taxon>
        <taxon>Muroidea</taxon>
        <taxon>Muridae</taxon>
        <taxon>Murinae</taxon>
        <taxon>Mus</taxon>
        <taxon>Mus</taxon>
    </lineage>
</organism>
<comment type="function">
    <text evidence="1 6 7">E3 ubiquitin and SUMO-protein ligase that plays a role in different biological processes such as innate immunity, inflammation or apoptosis (PubMed:16162816, PubMed:34953447). Potentiates MAP3K3-mediated activation of the NF-kappa-B, JUN/AP1 and DDIT3 transcriptional regulators (By similarity). Negatively regulates MYB transcriptional activity by sequestering it to the cytosol via SUMOylation (PubMed:16162816). Plays a role in the phosphorylation of MAPK1 and/or MAPK3, probably via its interaction with MAP3K3. Negatively regulates RLR-mediated innate immunity by promoting 'Lys-48'-linked ubiquitination of TBK1 through its RING domain to inhibit the cellular antiviral response (By similarity). Promotes 'Lys-29'-linked polyubiquitination of NEMO/IKBKG and RELA leading to targeting these two proteins to lysosomal degradative pathways, reducing the transcriptional activity of NF-kappa-B (By similarity).</text>
</comment>
<comment type="catalytic activity">
    <reaction evidence="1">
        <text>S-ubiquitinyl-[E2 ubiquitin-conjugating enzyme]-L-cysteine + [acceptor protein]-L-lysine = [E2 ubiquitin-conjugating enzyme]-L-cysteine + N(6)-ubiquitinyl-[acceptor protein]-L-lysine.</text>
        <dbReference type="EC" id="2.3.2.27"/>
    </reaction>
</comment>
<comment type="pathway">
    <text>Protein modification; protein ubiquitination.</text>
</comment>
<comment type="subunit">
    <text evidence="1">Homodimer. Interacts with MAP3K3 and promotes the kinase activity of this enzyme.</text>
</comment>
<comment type="subcellular location">
    <subcellularLocation>
        <location evidence="1">Cytoplasmic vesicle</location>
    </subcellularLocation>
    <subcellularLocation>
        <location evidence="6">Cytoplasm</location>
    </subcellularLocation>
    <subcellularLocation>
        <location evidence="6">Nucleus</location>
    </subcellularLocation>
    <text evidence="1">Colocalizes with MAP3K3 to vesicle-like structures throughout the cytoplasm.</text>
</comment>
<comment type="tissue specificity">
    <text evidence="6">Ubiquitously expressed. Expression is relatively high in heart, liver, kidney, testis, prostate, thyroid, and salivary gland.</text>
</comment>
<comment type="PTM">
    <text evidence="1">Phosphorylated by MAP3K3.</text>
</comment>
<comment type="PTM">
    <text evidence="1">Ubiquitinates itself upon phosphorylation.</text>
</comment>
<comment type="disruption phenotype">
    <text evidence="7">Brain-specific TRAF7 deletion ameliorates neuronal injury and abnormal behavior in traumatic brain injury (tbi) mice. Mechanistically, attenuates neuronal death in cortex and hippocampus through reducing Caspase-3/CASP3 cleavage.</text>
</comment>
<comment type="similarity">
    <text evidence="8">Belongs to the WD repeat TRAF7 family.</text>
</comment>
<gene>
    <name evidence="10" type="primary">Traf7</name>
</gene>
<proteinExistence type="evidence at protein level"/>
<dbReference type="EC" id="2.3.2.-" evidence="6"/>
<dbReference type="EC" id="2.3.2.27" evidence="1"/>
<dbReference type="EMBL" id="BC005649">
    <property type="protein sequence ID" value="AAH05649.1"/>
    <property type="molecule type" value="mRNA"/>
</dbReference>
<dbReference type="EMBL" id="BC008598">
    <property type="protein sequence ID" value="AAH08598.1"/>
    <property type="molecule type" value="mRNA"/>
</dbReference>
<dbReference type="SMR" id="Q922B6"/>
<dbReference type="FunCoup" id="Q922B6">
    <property type="interactions" value="1041"/>
</dbReference>
<dbReference type="STRING" id="10090.ENSMUSP00000134759"/>
<dbReference type="iPTMnet" id="Q922B6"/>
<dbReference type="PaxDb" id="10090-ENSMUSP00000135267"/>
<dbReference type="ProteomicsDB" id="258963"/>
<dbReference type="Pumba" id="Q922B6"/>
<dbReference type="UCSC" id="uc008awr.2">
    <property type="organism name" value="mouse"/>
</dbReference>
<dbReference type="AGR" id="MGI:3042141"/>
<dbReference type="MGI" id="MGI:3042141">
    <property type="gene designation" value="Traf7"/>
</dbReference>
<dbReference type="eggNOG" id="KOG0274">
    <property type="taxonomic scope" value="Eukaryota"/>
</dbReference>
<dbReference type="eggNOG" id="KOG0297">
    <property type="taxonomic scope" value="Eukaryota"/>
</dbReference>
<dbReference type="InParanoid" id="Q922B6"/>
<dbReference type="Reactome" id="R-MMU-983168">
    <property type="pathway name" value="Antigen processing: Ubiquitination &amp; Proteasome degradation"/>
</dbReference>
<dbReference type="UniPathway" id="UPA00143"/>
<dbReference type="ChiTaRS" id="Traf7">
    <property type="organism name" value="mouse"/>
</dbReference>
<dbReference type="PRO" id="PR:Q922B6"/>
<dbReference type="Proteomes" id="UP000000589">
    <property type="component" value="Unplaced"/>
</dbReference>
<dbReference type="RNAct" id="Q922B6">
    <property type="molecule type" value="protein"/>
</dbReference>
<dbReference type="GO" id="GO:0031410">
    <property type="term" value="C:cytoplasmic vesicle"/>
    <property type="evidence" value="ECO:0007669"/>
    <property type="project" value="UniProtKB-KW"/>
</dbReference>
<dbReference type="GO" id="GO:0005829">
    <property type="term" value="C:cytosol"/>
    <property type="evidence" value="ECO:0000314"/>
    <property type="project" value="MGI"/>
</dbReference>
<dbReference type="GO" id="GO:0005634">
    <property type="term" value="C:nucleus"/>
    <property type="evidence" value="ECO:0000314"/>
    <property type="project" value="MGI"/>
</dbReference>
<dbReference type="GO" id="GO:0048471">
    <property type="term" value="C:perinuclear region of cytoplasm"/>
    <property type="evidence" value="ECO:0000314"/>
    <property type="project" value="MGI"/>
</dbReference>
<dbReference type="GO" id="GO:0000151">
    <property type="term" value="C:ubiquitin ligase complex"/>
    <property type="evidence" value="ECO:0000250"/>
    <property type="project" value="UniProtKB"/>
</dbReference>
<dbReference type="GO" id="GO:0004842">
    <property type="term" value="F:ubiquitin-protein transferase activity"/>
    <property type="evidence" value="ECO:0000250"/>
    <property type="project" value="UniProtKB"/>
</dbReference>
<dbReference type="GO" id="GO:0008270">
    <property type="term" value="F:zinc ion binding"/>
    <property type="evidence" value="ECO:0007669"/>
    <property type="project" value="UniProtKB-KW"/>
</dbReference>
<dbReference type="GO" id="GO:0006915">
    <property type="term" value="P:apoptotic process"/>
    <property type="evidence" value="ECO:0000266"/>
    <property type="project" value="MGI"/>
</dbReference>
<dbReference type="GO" id="GO:0071354">
    <property type="term" value="P:cellular response to interleukin-6"/>
    <property type="evidence" value="ECO:0000314"/>
    <property type="project" value="MGI"/>
</dbReference>
<dbReference type="GO" id="GO:0000122">
    <property type="term" value="P:negative regulation of transcription by RNA polymerase II"/>
    <property type="evidence" value="ECO:0000314"/>
    <property type="project" value="MGI"/>
</dbReference>
<dbReference type="GO" id="GO:2001235">
    <property type="term" value="P:positive regulation of apoptotic signaling pathway"/>
    <property type="evidence" value="ECO:0000250"/>
    <property type="project" value="UniProtKB"/>
</dbReference>
<dbReference type="GO" id="GO:0043410">
    <property type="term" value="P:positive regulation of MAPK cascade"/>
    <property type="evidence" value="ECO:0000250"/>
    <property type="project" value="UniProtKB"/>
</dbReference>
<dbReference type="GO" id="GO:0033235">
    <property type="term" value="P:positive regulation of protein sumoylation"/>
    <property type="evidence" value="ECO:0000314"/>
    <property type="project" value="MGI"/>
</dbReference>
<dbReference type="GO" id="GO:0016567">
    <property type="term" value="P:protein ubiquitination"/>
    <property type="evidence" value="ECO:0000250"/>
    <property type="project" value="UniProtKB"/>
</dbReference>
<dbReference type="GO" id="GO:0032880">
    <property type="term" value="P:regulation of protein localization"/>
    <property type="evidence" value="ECO:0000314"/>
    <property type="project" value="MGI"/>
</dbReference>
<dbReference type="CDD" id="cd16644">
    <property type="entry name" value="mRING-HC-C3HC3D_TRAF7"/>
    <property type="match status" value="1"/>
</dbReference>
<dbReference type="CDD" id="cd00200">
    <property type="entry name" value="WD40"/>
    <property type="match status" value="1"/>
</dbReference>
<dbReference type="FunFam" id="3.30.40.10:FF:000210">
    <property type="entry name" value="E3 ubiquitin-protein ligase TRAF7 isoform X1"/>
    <property type="match status" value="1"/>
</dbReference>
<dbReference type="FunFam" id="3.30.40.10:FF:000224">
    <property type="entry name" value="E3 ubiquitin-protein ligase TRAF7 isoform X1"/>
    <property type="match status" value="1"/>
</dbReference>
<dbReference type="FunFam" id="2.130.10.10:FF:000096">
    <property type="entry name" value="E3 ubiquitin-protein ligase TRAF7 isoform X2"/>
    <property type="match status" value="1"/>
</dbReference>
<dbReference type="FunFam" id="2.130.10.10:FF:000067">
    <property type="entry name" value="Putative E3 ubiquitin-protein ligase TRAF7"/>
    <property type="match status" value="1"/>
</dbReference>
<dbReference type="Gene3D" id="2.130.10.10">
    <property type="entry name" value="YVTN repeat-like/Quinoprotein amine dehydrogenase"/>
    <property type="match status" value="2"/>
</dbReference>
<dbReference type="Gene3D" id="3.30.40.10">
    <property type="entry name" value="Zinc/RING finger domain, C3HC4 (zinc finger)"/>
    <property type="match status" value="2"/>
</dbReference>
<dbReference type="InterPro" id="IPR020472">
    <property type="entry name" value="G-protein_beta_WD-40_rep"/>
</dbReference>
<dbReference type="InterPro" id="IPR015943">
    <property type="entry name" value="WD40/YVTN_repeat-like_dom_sf"/>
</dbReference>
<dbReference type="InterPro" id="IPR019775">
    <property type="entry name" value="WD40_repeat_CS"/>
</dbReference>
<dbReference type="InterPro" id="IPR036322">
    <property type="entry name" value="WD40_repeat_dom_sf"/>
</dbReference>
<dbReference type="InterPro" id="IPR001680">
    <property type="entry name" value="WD40_rpt"/>
</dbReference>
<dbReference type="InterPro" id="IPR027370">
    <property type="entry name" value="Znf-RING_euk"/>
</dbReference>
<dbReference type="InterPro" id="IPR001841">
    <property type="entry name" value="Znf_RING"/>
</dbReference>
<dbReference type="InterPro" id="IPR013083">
    <property type="entry name" value="Znf_RING/FYVE/PHD"/>
</dbReference>
<dbReference type="InterPro" id="IPR017907">
    <property type="entry name" value="Znf_RING_CS"/>
</dbReference>
<dbReference type="InterPro" id="IPR001293">
    <property type="entry name" value="Znf_TRAF"/>
</dbReference>
<dbReference type="PANTHER" id="PTHR19848:SF6">
    <property type="entry name" value="E3 UBIQUITIN-PROTEIN LIGASE TRAF7"/>
    <property type="match status" value="1"/>
</dbReference>
<dbReference type="PANTHER" id="PTHR19848">
    <property type="entry name" value="WD40 REPEAT PROTEIN"/>
    <property type="match status" value="1"/>
</dbReference>
<dbReference type="Pfam" id="PF00400">
    <property type="entry name" value="WD40"/>
    <property type="match status" value="5"/>
</dbReference>
<dbReference type="Pfam" id="PF13445">
    <property type="entry name" value="zf-RING_UBOX"/>
    <property type="match status" value="1"/>
</dbReference>
<dbReference type="PRINTS" id="PR00320">
    <property type="entry name" value="GPROTEINBRPT"/>
</dbReference>
<dbReference type="SMART" id="SM00184">
    <property type="entry name" value="RING"/>
    <property type="match status" value="1"/>
</dbReference>
<dbReference type="SMART" id="SM00320">
    <property type="entry name" value="WD40"/>
    <property type="match status" value="7"/>
</dbReference>
<dbReference type="SUPFAM" id="SSF57850">
    <property type="entry name" value="RING/U-box"/>
    <property type="match status" value="1"/>
</dbReference>
<dbReference type="SUPFAM" id="SSF49599">
    <property type="entry name" value="TRAF domain-like"/>
    <property type="match status" value="2"/>
</dbReference>
<dbReference type="SUPFAM" id="SSF50978">
    <property type="entry name" value="WD40 repeat-like"/>
    <property type="match status" value="1"/>
</dbReference>
<dbReference type="PROSITE" id="PS00678">
    <property type="entry name" value="WD_REPEATS_1"/>
    <property type="match status" value="2"/>
</dbReference>
<dbReference type="PROSITE" id="PS50082">
    <property type="entry name" value="WD_REPEATS_2"/>
    <property type="match status" value="5"/>
</dbReference>
<dbReference type="PROSITE" id="PS50294">
    <property type="entry name" value="WD_REPEATS_REGION"/>
    <property type="match status" value="1"/>
</dbReference>
<dbReference type="PROSITE" id="PS00518">
    <property type="entry name" value="ZF_RING_1"/>
    <property type="match status" value="1"/>
</dbReference>
<dbReference type="PROSITE" id="PS50089">
    <property type="entry name" value="ZF_RING_2"/>
    <property type="match status" value="1"/>
</dbReference>
<dbReference type="PROSITE" id="PS50145">
    <property type="entry name" value="ZF_TRAF"/>
    <property type="match status" value="1"/>
</dbReference>
<sequence>MPPINTPRRSDSAISVRSLHSESSMSLRSTFSLPEEEEEPEPLVFAEQPSVKLCCQLCCSVFKDPVITTCGHTFCRRCALKSEKCPVDNAKLTVVVNNIAVAEQIGELFIHCRHGCHAAGTGKPGVFEVDPRGCPFTIKLSARKDHESSCDYRPVRCPNNPSCPPLLKMNLEAHLKECEHIKCPHSKYGCTFIGNQDTYETHLETCRFEGLKEFLQQTDDRFHEMHVALAQKDQEIAFLRSMLGKLSEKIDQLEKSLELKFDVLDENQSKLSEDLMEFRRDASMLNDELSHINARLNMGILGSYDPQQIFKCKGTFVGHQGPVWCLCVYSMGDLLFSGSSDKTIKVWDTCTTYKCQKTLEGHDGIVLALCIQGCKLYSGSADCTIIVWDIQNLQKVNTIRAHDNPVCTLVSSHNMLFSGSLKAIKVWDIVGTELKLKKELTGLNHWVRALVAAQSYLYSGSYQTIKIWDIRTLDCIHVLQTSGGSVYSIAVTNHHIVCGTYENLIHVWDIESKEQVRTLTGHVGTVYALAVISTPDQTKVFSASYDRSLRVWSMDNMICTQTLLRHQGSVTALAVSRGRLFSGAVDSTVKVWTC</sequence>
<accession>Q922B6</accession>
<accession>Q99JV3</accession>
<keyword id="KW-0053">Apoptosis</keyword>
<keyword id="KW-0963">Cytoplasm</keyword>
<keyword id="KW-0968">Cytoplasmic vesicle</keyword>
<keyword id="KW-0479">Metal-binding</keyword>
<keyword id="KW-0539">Nucleus</keyword>
<keyword id="KW-0597">Phosphoprotein</keyword>
<keyword id="KW-1185">Reference proteome</keyword>
<keyword id="KW-0677">Repeat</keyword>
<keyword id="KW-0804">Transcription</keyword>
<keyword id="KW-0805">Transcription regulation</keyword>
<keyword id="KW-0808">Transferase</keyword>
<keyword id="KW-0832">Ubl conjugation</keyword>
<keyword id="KW-0833">Ubl conjugation pathway</keyword>
<keyword id="KW-0853">WD repeat</keyword>
<keyword id="KW-0862">Zinc</keyword>
<keyword id="KW-0863">Zinc-finger</keyword>
<protein>
    <recommendedName>
        <fullName>E3 ubiquitin-protein ligase TRAF7</fullName>
        <ecNumber evidence="6">2.3.2.-</ecNumber>
        <ecNumber evidence="1">2.3.2.27</ecNumber>
    </recommendedName>
    <alternativeName>
        <fullName evidence="8">RING-type E3 ubiquitin transferase TRAF7</fullName>
    </alternativeName>
    <alternativeName>
        <fullName>TNF receptor-associated factor 7</fullName>
    </alternativeName>
</protein>